<comment type="function">
    <text evidence="1">Catalyzes the initial step of the lipid cycle reactions in the biosynthesis of the cell wall peptidoglycan: transfers peptidoglycan precursor phospho-MurNAc-pentapeptide from UDP-MurNAc-pentapeptide onto the lipid carrier undecaprenyl phosphate, yielding undecaprenyl-pyrophosphoryl-MurNAc-pentapeptide, known as lipid I.</text>
</comment>
<comment type="catalytic activity">
    <reaction evidence="1">
        <text>UDP-N-acetyl-alpha-D-muramoyl-L-alanyl-gamma-D-glutamyl-meso-2,6-diaminopimeloyl-D-alanyl-D-alanine + di-trans,octa-cis-undecaprenyl phosphate = di-trans,octa-cis-undecaprenyl diphospho-N-acetyl-alpha-D-muramoyl-L-alanyl-D-glutamyl-meso-2,6-diaminopimeloyl-D-alanyl-D-alanine + UMP</text>
        <dbReference type="Rhea" id="RHEA:28386"/>
        <dbReference type="ChEBI" id="CHEBI:57865"/>
        <dbReference type="ChEBI" id="CHEBI:60392"/>
        <dbReference type="ChEBI" id="CHEBI:61386"/>
        <dbReference type="ChEBI" id="CHEBI:61387"/>
        <dbReference type="EC" id="2.7.8.13"/>
    </reaction>
</comment>
<comment type="cofactor">
    <cofactor evidence="1">
        <name>Mg(2+)</name>
        <dbReference type="ChEBI" id="CHEBI:18420"/>
    </cofactor>
</comment>
<comment type="pathway">
    <text evidence="1">Cell wall biogenesis; peptidoglycan biosynthesis.</text>
</comment>
<comment type="subcellular location">
    <subcellularLocation>
        <location evidence="1">Cell inner membrane</location>
        <topology evidence="1">Multi-pass membrane protein</topology>
    </subcellularLocation>
</comment>
<comment type="similarity">
    <text evidence="1">Belongs to the glycosyltransferase 4 family. MraY subfamily.</text>
</comment>
<proteinExistence type="inferred from homology"/>
<keyword id="KW-0131">Cell cycle</keyword>
<keyword id="KW-0132">Cell division</keyword>
<keyword id="KW-0997">Cell inner membrane</keyword>
<keyword id="KW-1003">Cell membrane</keyword>
<keyword id="KW-0133">Cell shape</keyword>
<keyword id="KW-0961">Cell wall biogenesis/degradation</keyword>
<keyword id="KW-0460">Magnesium</keyword>
<keyword id="KW-0472">Membrane</keyword>
<keyword id="KW-0479">Metal-binding</keyword>
<keyword id="KW-0573">Peptidoglycan synthesis</keyword>
<keyword id="KW-1185">Reference proteome</keyword>
<keyword id="KW-0808">Transferase</keyword>
<keyword id="KW-0812">Transmembrane</keyword>
<keyword id="KW-1133">Transmembrane helix</keyword>
<reference key="1">
    <citation type="submission" date="1999-08" db="EMBL/GenBank/DDBJ databases">
        <authorList>
            <person name="Um H.W."/>
            <person name="Kang H.S."/>
        </authorList>
    </citation>
    <scope>NUCLEOTIDE SEQUENCE [GENOMIC DNA]</scope>
    <source>
        <strain>ATCC 31821 / ZM4 / CP4</strain>
    </source>
</reference>
<reference key="2">
    <citation type="journal article" date="2005" name="Nat. Biotechnol.">
        <title>The genome sequence of the ethanologenic bacterium Zymomonas mobilis ZM4.</title>
        <authorList>
            <person name="Seo J.-S."/>
            <person name="Chong H."/>
            <person name="Park H.S."/>
            <person name="Yoon K.-O."/>
            <person name="Jung C."/>
            <person name="Kim J.J."/>
            <person name="Hong J.H."/>
            <person name="Kim H."/>
            <person name="Kim J.-H."/>
            <person name="Kil J.-I."/>
            <person name="Park C.J."/>
            <person name="Oh H.-M."/>
            <person name="Lee J.-S."/>
            <person name="Jin S.-J."/>
            <person name="Um H.-W."/>
            <person name="Lee H.-J."/>
            <person name="Oh S.-J."/>
            <person name="Kim J.Y."/>
            <person name="Kang H.L."/>
            <person name="Lee S.Y."/>
            <person name="Lee K.J."/>
            <person name="Kang H.S."/>
        </authorList>
    </citation>
    <scope>NUCLEOTIDE SEQUENCE [LARGE SCALE GENOMIC DNA]</scope>
    <source>
        <strain>ATCC 31821 / ZM4 / CP4</strain>
    </source>
</reference>
<organism>
    <name type="scientific">Zymomonas mobilis subsp. mobilis (strain ATCC 31821 / ZM4 / CP4)</name>
    <dbReference type="NCBI Taxonomy" id="264203"/>
    <lineage>
        <taxon>Bacteria</taxon>
        <taxon>Pseudomonadati</taxon>
        <taxon>Pseudomonadota</taxon>
        <taxon>Alphaproteobacteria</taxon>
        <taxon>Sphingomonadales</taxon>
        <taxon>Zymomonadaceae</taxon>
        <taxon>Zymomonas</taxon>
    </lineage>
</organism>
<dbReference type="EC" id="2.7.8.13" evidence="1"/>
<dbReference type="EMBL" id="AF179611">
    <property type="protein sequence ID" value="AAD53939.1"/>
    <property type="molecule type" value="Genomic_DNA"/>
</dbReference>
<dbReference type="EMBL" id="AE008692">
    <property type="protein sequence ID" value="AAV89452.1"/>
    <property type="molecule type" value="Genomic_DNA"/>
</dbReference>
<dbReference type="RefSeq" id="WP_011240698.1">
    <property type="nucleotide sequence ID" value="NZ_CP035711.1"/>
</dbReference>
<dbReference type="SMR" id="P56834"/>
<dbReference type="STRING" id="264203.ZMO0828"/>
<dbReference type="GeneID" id="79904013"/>
<dbReference type="KEGG" id="zmo:ZMO0828"/>
<dbReference type="eggNOG" id="COG0472">
    <property type="taxonomic scope" value="Bacteria"/>
</dbReference>
<dbReference type="HOGENOM" id="CLU_023982_0_0_5"/>
<dbReference type="UniPathway" id="UPA00219"/>
<dbReference type="Proteomes" id="UP000001173">
    <property type="component" value="Chromosome"/>
</dbReference>
<dbReference type="GO" id="GO:0005886">
    <property type="term" value="C:plasma membrane"/>
    <property type="evidence" value="ECO:0007669"/>
    <property type="project" value="UniProtKB-SubCell"/>
</dbReference>
<dbReference type="GO" id="GO:0046872">
    <property type="term" value="F:metal ion binding"/>
    <property type="evidence" value="ECO:0007669"/>
    <property type="project" value="UniProtKB-KW"/>
</dbReference>
<dbReference type="GO" id="GO:0008963">
    <property type="term" value="F:phospho-N-acetylmuramoyl-pentapeptide-transferase activity"/>
    <property type="evidence" value="ECO:0007669"/>
    <property type="project" value="UniProtKB-UniRule"/>
</dbReference>
<dbReference type="GO" id="GO:0051992">
    <property type="term" value="F:UDP-N-acetylmuramoyl-L-alanyl-D-glutamyl-meso-2,6-diaminopimelyl-D-alanyl-D-alanine:undecaprenyl-phosphate transferase activity"/>
    <property type="evidence" value="ECO:0007669"/>
    <property type="project" value="RHEA"/>
</dbReference>
<dbReference type="GO" id="GO:0051301">
    <property type="term" value="P:cell division"/>
    <property type="evidence" value="ECO:0007669"/>
    <property type="project" value="UniProtKB-KW"/>
</dbReference>
<dbReference type="GO" id="GO:0071555">
    <property type="term" value="P:cell wall organization"/>
    <property type="evidence" value="ECO:0007669"/>
    <property type="project" value="UniProtKB-KW"/>
</dbReference>
<dbReference type="GO" id="GO:0009252">
    <property type="term" value="P:peptidoglycan biosynthetic process"/>
    <property type="evidence" value="ECO:0007669"/>
    <property type="project" value="UniProtKB-UniRule"/>
</dbReference>
<dbReference type="GO" id="GO:0008360">
    <property type="term" value="P:regulation of cell shape"/>
    <property type="evidence" value="ECO:0007669"/>
    <property type="project" value="UniProtKB-KW"/>
</dbReference>
<dbReference type="CDD" id="cd06852">
    <property type="entry name" value="GT_MraY"/>
    <property type="match status" value="1"/>
</dbReference>
<dbReference type="HAMAP" id="MF_00038">
    <property type="entry name" value="MraY"/>
    <property type="match status" value="1"/>
</dbReference>
<dbReference type="InterPro" id="IPR000715">
    <property type="entry name" value="Glycosyl_transferase_4"/>
</dbReference>
<dbReference type="InterPro" id="IPR003524">
    <property type="entry name" value="PNAcMuramoyl-5peptid_Trfase"/>
</dbReference>
<dbReference type="InterPro" id="IPR018480">
    <property type="entry name" value="PNAcMuramoyl-5peptid_Trfase_CS"/>
</dbReference>
<dbReference type="NCBIfam" id="TIGR00445">
    <property type="entry name" value="mraY"/>
    <property type="match status" value="1"/>
</dbReference>
<dbReference type="PANTHER" id="PTHR22926">
    <property type="entry name" value="PHOSPHO-N-ACETYLMURAMOYL-PENTAPEPTIDE-TRANSFERASE"/>
    <property type="match status" value="1"/>
</dbReference>
<dbReference type="PANTHER" id="PTHR22926:SF5">
    <property type="entry name" value="PHOSPHO-N-ACETYLMURAMOYL-PENTAPEPTIDE-TRANSFERASE HOMOLOG"/>
    <property type="match status" value="1"/>
</dbReference>
<dbReference type="Pfam" id="PF00953">
    <property type="entry name" value="Glycos_transf_4"/>
    <property type="match status" value="1"/>
</dbReference>
<dbReference type="Pfam" id="PF10555">
    <property type="entry name" value="MraY_sig1"/>
    <property type="match status" value="1"/>
</dbReference>
<dbReference type="PROSITE" id="PS01347">
    <property type="entry name" value="MRAY_1"/>
    <property type="match status" value="1"/>
</dbReference>
<dbReference type="PROSITE" id="PS01348">
    <property type="entry name" value="MRAY_2"/>
    <property type="match status" value="1"/>
</dbReference>
<protein>
    <recommendedName>
        <fullName evidence="1">Phospho-N-acetylmuramoyl-pentapeptide-transferase</fullName>
        <ecNumber evidence="1">2.7.8.13</ecNumber>
    </recommendedName>
    <alternativeName>
        <fullName evidence="1">UDP-MurNAc-pentapeptide phosphotransferase</fullName>
    </alternativeName>
</protein>
<accession>P56834</accession>
<accession>Q5NPA8</accession>
<sequence>MFYLIASAEGFSRLFNLIRYITFRTGAAAITALLIGLIFGPRFIGWMRIHQHKGQPIRDDGPKTHLAKAGTPTMGGLMILIAVSISLFLWMDFANPYVWACIAVMLGFGVIGFIDDYDKVTQNSTRGVSGKVRLLWEFGIAFFACYLILKDGNTQLYLPFYNGPVIDLGWFYYPFAAFVIVGTANSVNLTDGLDGLATMPVIIASLAFFVISYVVGNAVFAHYLGIPHVPGAGELTILTGAIIGAGFAFLWFNAPPAAIFMGDTGSLALGGCLGTIAVATHHEIVLGIVGGLFVAEALSVIIQVGFYKRFKRRVFRMAPLHHHFEQLGWSEPTVVIRFWIISFALALLGLATLKLR</sequence>
<evidence type="ECO:0000255" key="1">
    <source>
        <dbReference type="HAMAP-Rule" id="MF_00038"/>
    </source>
</evidence>
<gene>
    <name evidence="1" type="primary">mraY</name>
    <name type="ordered locus">ZMO0828</name>
</gene>
<name>MRAY_ZYMMO</name>
<feature type="chain" id="PRO_0000108936" description="Phospho-N-acetylmuramoyl-pentapeptide-transferase">
    <location>
        <begin position="1"/>
        <end position="356"/>
    </location>
</feature>
<feature type="transmembrane region" description="Helical" evidence="1">
    <location>
        <begin position="27"/>
        <end position="47"/>
    </location>
</feature>
<feature type="transmembrane region" description="Helical" evidence="1">
    <location>
        <begin position="74"/>
        <end position="94"/>
    </location>
</feature>
<feature type="transmembrane region" description="Helical" evidence="1">
    <location>
        <begin position="97"/>
        <end position="117"/>
    </location>
</feature>
<feature type="transmembrane region" description="Helical" evidence="1">
    <location>
        <begin position="128"/>
        <end position="148"/>
    </location>
</feature>
<feature type="transmembrane region" description="Helical" evidence="1">
    <location>
        <begin position="164"/>
        <end position="184"/>
    </location>
</feature>
<feature type="transmembrane region" description="Helical" evidence="1">
    <location>
        <begin position="201"/>
        <end position="221"/>
    </location>
</feature>
<feature type="transmembrane region" description="Helical" evidence="1">
    <location>
        <begin position="241"/>
        <end position="261"/>
    </location>
</feature>
<feature type="transmembrane region" description="Helical" evidence="1">
    <location>
        <begin position="284"/>
        <end position="304"/>
    </location>
</feature>
<feature type="transmembrane region" description="Helical" evidence="1">
    <location>
        <begin position="333"/>
        <end position="353"/>
    </location>
</feature>